<keyword id="KW-0007">Acetylation</keyword>
<keyword id="KW-0090">Biological rhythms</keyword>
<keyword id="KW-0238">DNA-binding</keyword>
<keyword id="KW-0413">Isomerase</keyword>
<keyword id="KW-1017">Isopeptide bond</keyword>
<keyword id="KW-0539">Nucleus</keyword>
<keyword id="KW-0597">Phosphoprotein</keyword>
<keyword id="KW-1185">Reference proteome</keyword>
<keyword id="KW-0799">Topoisomerase</keyword>
<keyword id="KW-0832">Ubl conjugation</keyword>
<organism>
    <name type="scientific">Rattus norvegicus</name>
    <name type="common">Rat</name>
    <dbReference type="NCBI Taxonomy" id="10116"/>
    <lineage>
        <taxon>Eukaryota</taxon>
        <taxon>Metazoa</taxon>
        <taxon>Chordata</taxon>
        <taxon>Craniata</taxon>
        <taxon>Vertebrata</taxon>
        <taxon>Euteleostomi</taxon>
        <taxon>Mammalia</taxon>
        <taxon>Eutheria</taxon>
        <taxon>Euarchontoglires</taxon>
        <taxon>Glires</taxon>
        <taxon>Rodentia</taxon>
        <taxon>Myomorpha</taxon>
        <taxon>Muroidea</taxon>
        <taxon>Muridae</taxon>
        <taxon>Murinae</taxon>
        <taxon>Rattus</taxon>
    </lineage>
</organism>
<dbReference type="EC" id="5.6.2.1" evidence="5"/>
<dbReference type="EMBL" id="AF140782">
    <property type="protein sequence ID" value="AAD30137.1"/>
    <property type="molecule type" value="mRNA"/>
</dbReference>
<dbReference type="RefSeq" id="NP_072137.1">
    <property type="nucleotide sequence ID" value="NM_022615.2"/>
</dbReference>
<dbReference type="SMR" id="Q9WUL0"/>
<dbReference type="BioGRID" id="249131">
    <property type="interactions" value="2"/>
</dbReference>
<dbReference type="FunCoup" id="Q9WUL0">
    <property type="interactions" value="3196"/>
</dbReference>
<dbReference type="IntAct" id="Q9WUL0">
    <property type="interactions" value="1"/>
</dbReference>
<dbReference type="STRING" id="10116.ENSRNOP00000072794"/>
<dbReference type="BindingDB" id="Q9WUL0"/>
<dbReference type="ChEMBL" id="CHEMBL1075164"/>
<dbReference type="GlyGen" id="Q9WUL0">
    <property type="glycosylation" value="1 site, 1 O-linked glycan (1 site)"/>
</dbReference>
<dbReference type="iPTMnet" id="Q9WUL0"/>
<dbReference type="PhosphoSitePlus" id="Q9WUL0"/>
<dbReference type="jPOST" id="Q9WUL0"/>
<dbReference type="GeneID" id="64550"/>
<dbReference type="KEGG" id="rno:64550"/>
<dbReference type="UCSC" id="RGD:621246">
    <property type="organism name" value="rat"/>
</dbReference>
<dbReference type="AGR" id="RGD:621246"/>
<dbReference type="CTD" id="7150"/>
<dbReference type="RGD" id="621246">
    <property type="gene designation" value="Top1"/>
</dbReference>
<dbReference type="InParanoid" id="Q9WUL0"/>
<dbReference type="OrthoDB" id="53071at9989"/>
<dbReference type="PhylomeDB" id="Q9WUL0"/>
<dbReference type="TreeFam" id="TF105281"/>
<dbReference type="Reactome" id="R-RNO-4615885">
    <property type="pathway name" value="SUMOylation of DNA replication proteins"/>
</dbReference>
<dbReference type="PRO" id="PR:Q9WUL0"/>
<dbReference type="Proteomes" id="UP000002494">
    <property type="component" value="Unplaced"/>
</dbReference>
<dbReference type="GO" id="GO:0005737">
    <property type="term" value="C:cytoplasm"/>
    <property type="evidence" value="ECO:0000266"/>
    <property type="project" value="RGD"/>
</dbReference>
<dbReference type="GO" id="GO:0001651">
    <property type="term" value="C:dense fibrillar component"/>
    <property type="evidence" value="ECO:0000314"/>
    <property type="project" value="RGD"/>
</dbReference>
<dbReference type="GO" id="GO:0001650">
    <property type="term" value="C:fibrillar center"/>
    <property type="evidence" value="ECO:0000314"/>
    <property type="project" value="RGD"/>
</dbReference>
<dbReference type="GO" id="GO:0001673">
    <property type="term" value="C:male germ cell nucleus"/>
    <property type="evidence" value="ECO:0000266"/>
    <property type="project" value="RGD"/>
</dbReference>
<dbReference type="GO" id="GO:0000228">
    <property type="term" value="C:nuclear chromosome"/>
    <property type="evidence" value="ECO:0000266"/>
    <property type="project" value="RGD"/>
</dbReference>
<dbReference type="GO" id="GO:0005730">
    <property type="term" value="C:nucleolus"/>
    <property type="evidence" value="ECO:0000266"/>
    <property type="project" value="RGD"/>
</dbReference>
<dbReference type="GO" id="GO:0005654">
    <property type="term" value="C:nucleoplasm"/>
    <property type="evidence" value="ECO:0000266"/>
    <property type="project" value="RGD"/>
</dbReference>
<dbReference type="GO" id="GO:0005634">
    <property type="term" value="C:nucleus"/>
    <property type="evidence" value="ECO:0000266"/>
    <property type="project" value="RGD"/>
</dbReference>
<dbReference type="GO" id="GO:0000932">
    <property type="term" value="C:P-body"/>
    <property type="evidence" value="ECO:0000266"/>
    <property type="project" value="RGD"/>
</dbReference>
<dbReference type="GO" id="GO:0043204">
    <property type="term" value="C:perikaryon"/>
    <property type="evidence" value="ECO:0000266"/>
    <property type="project" value="RGD"/>
</dbReference>
<dbReference type="GO" id="GO:0032993">
    <property type="term" value="C:protein-DNA complex"/>
    <property type="evidence" value="ECO:0000266"/>
    <property type="project" value="RGD"/>
</dbReference>
<dbReference type="GO" id="GO:0005524">
    <property type="term" value="F:ATP binding"/>
    <property type="evidence" value="ECO:0000266"/>
    <property type="project" value="RGD"/>
</dbReference>
<dbReference type="GO" id="GO:0003682">
    <property type="term" value="F:chromatin binding"/>
    <property type="evidence" value="ECO:0000266"/>
    <property type="project" value="RGD"/>
</dbReference>
<dbReference type="GO" id="GO:0031490">
    <property type="term" value="F:chromatin DNA binding"/>
    <property type="evidence" value="ECO:0000314"/>
    <property type="project" value="RGD"/>
</dbReference>
<dbReference type="GO" id="GO:0003677">
    <property type="term" value="F:DNA binding"/>
    <property type="evidence" value="ECO:0000314"/>
    <property type="project" value="RGD"/>
</dbReference>
<dbReference type="GO" id="GO:0008301">
    <property type="term" value="F:DNA binding, bending"/>
    <property type="evidence" value="ECO:0000266"/>
    <property type="project" value="RGD"/>
</dbReference>
<dbReference type="GO" id="GO:0003917">
    <property type="term" value="F:DNA topoisomerase type I (single strand cut, ATP-independent) activity"/>
    <property type="evidence" value="ECO:0000314"/>
    <property type="project" value="RGD"/>
</dbReference>
<dbReference type="GO" id="GO:0003690">
    <property type="term" value="F:double-stranded DNA binding"/>
    <property type="evidence" value="ECO:0000266"/>
    <property type="project" value="RGD"/>
</dbReference>
<dbReference type="GO" id="GO:0019904">
    <property type="term" value="F:protein domain specific binding"/>
    <property type="evidence" value="ECO:0000266"/>
    <property type="project" value="RGD"/>
</dbReference>
<dbReference type="GO" id="GO:0004674">
    <property type="term" value="F:protein serine/threonine kinase activity"/>
    <property type="evidence" value="ECO:0000266"/>
    <property type="project" value="RGD"/>
</dbReference>
<dbReference type="GO" id="GO:0044877">
    <property type="term" value="F:protein-containing complex binding"/>
    <property type="evidence" value="ECO:0000314"/>
    <property type="project" value="RGD"/>
</dbReference>
<dbReference type="GO" id="GO:0000978">
    <property type="term" value="F:RNA polymerase II cis-regulatory region sequence-specific DNA binding"/>
    <property type="evidence" value="ECO:0000250"/>
    <property type="project" value="UniProtKB"/>
</dbReference>
<dbReference type="GO" id="GO:0003697">
    <property type="term" value="F:single-stranded DNA binding"/>
    <property type="evidence" value="ECO:0000266"/>
    <property type="project" value="RGD"/>
</dbReference>
<dbReference type="GO" id="GO:0097100">
    <property type="term" value="F:supercoiled DNA binding"/>
    <property type="evidence" value="ECO:0000266"/>
    <property type="project" value="RGD"/>
</dbReference>
<dbReference type="GO" id="GO:0031100">
    <property type="term" value="P:animal organ regeneration"/>
    <property type="evidence" value="ECO:0000270"/>
    <property type="project" value="RGD"/>
</dbReference>
<dbReference type="GO" id="GO:0071373">
    <property type="term" value="P:cellular response to luteinizing hormone stimulus"/>
    <property type="evidence" value="ECO:0000270"/>
    <property type="project" value="RGD"/>
</dbReference>
<dbReference type="GO" id="GO:0006338">
    <property type="term" value="P:chromatin remodeling"/>
    <property type="evidence" value="ECO:0000250"/>
    <property type="project" value="UniProtKB"/>
</dbReference>
<dbReference type="GO" id="GO:0007059">
    <property type="term" value="P:chromosome segregation"/>
    <property type="evidence" value="ECO:0000318"/>
    <property type="project" value="GO_Central"/>
</dbReference>
<dbReference type="GO" id="GO:0032922">
    <property type="term" value="P:circadian regulation of gene expression"/>
    <property type="evidence" value="ECO:0000250"/>
    <property type="project" value="UniProtKB"/>
</dbReference>
<dbReference type="GO" id="GO:0007623">
    <property type="term" value="P:circadian rhythm"/>
    <property type="evidence" value="ECO:0000266"/>
    <property type="project" value="RGD"/>
</dbReference>
<dbReference type="GO" id="GO:0006260">
    <property type="term" value="P:DNA replication"/>
    <property type="evidence" value="ECO:0000266"/>
    <property type="project" value="RGD"/>
</dbReference>
<dbReference type="GO" id="GO:0006265">
    <property type="term" value="P:DNA topological change"/>
    <property type="evidence" value="ECO:0000314"/>
    <property type="project" value="RGD"/>
</dbReference>
<dbReference type="GO" id="GO:0040016">
    <property type="term" value="P:embryonic cleavage"/>
    <property type="evidence" value="ECO:0000266"/>
    <property type="project" value="RGD"/>
</dbReference>
<dbReference type="GO" id="GO:0051591">
    <property type="term" value="P:response to cAMP"/>
    <property type="evidence" value="ECO:0000270"/>
    <property type="project" value="RGD"/>
</dbReference>
<dbReference type="GO" id="GO:0010332">
    <property type="term" value="P:response to gamma radiation"/>
    <property type="evidence" value="ECO:0000270"/>
    <property type="project" value="RGD"/>
</dbReference>
<dbReference type="GO" id="GO:0009266">
    <property type="term" value="P:response to temperature stimulus"/>
    <property type="evidence" value="ECO:0000270"/>
    <property type="project" value="RGD"/>
</dbReference>
<dbReference type="GO" id="GO:0009410">
    <property type="term" value="P:response to xenobiotic stimulus"/>
    <property type="evidence" value="ECO:0000266"/>
    <property type="project" value="RGD"/>
</dbReference>
<dbReference type="GO" id="GO:0009303">
    <property type="term" value="P:rRNA transcription"/>
    <property type="evidence" value="ECO:0000315"/>
    <property type="project" value="RGD"/>
</dbReference>
<dbReference type="CDD" id="cd00659">
    <property type="entry name" value="Topo_IB_C"/>
    <property type="match status" value="1"/>
</dbReference>
<dbReference type="CDD" id="cd03488">
    <property type="entry name" value="Topoisomer_IB_N_htopoI_like"/>
    <property type="match status" value="1"/>
</dbReference>
<dbReference type="FunFam" id="1.10.10.41:FF:000001">
    <property type="entry name" value="DNA topoisomerase I"/>
    <property type="match status" value="1"/>
</dbReference>
<dbReference type="FunFam" id="1.10.132.10:FF:000001">
    <property type="entry name" value="DNA topoisomerase I"/>
    <property type="match status" value="1"/>
</dbReference>
<dbReference type="FunFam" id="2.170.11.10:FF:000002">
    <property type="entry name" value="DNA topoisomerase I"/>
    <property type="match status" value="1"/>
</dbReference>
<dbReference type="FunFam" id="3.90.15.10:FF:000001">
    <property type="entry name" value="DNA topoisomerase I"/>
    <property type="match status" value="1"/>
</dbReference>
<dbReference type="Gene3D" id="1.10.132.10">
    <property type="match status" value="1"/>
</dbReference>
<dbReference type="Gene3D" id="2.170.11.10">
    <property type="entry name" value="DNA Topoisomerase I, domain 2"/>
    <property type="match status" value="1"/>
</dbReference>
<dbReference type="Gene3D" id="3.90.15.10">
    <property type="entry name" value="Topoisomerase I, Chain A, domain 3"/>
    <property type="match status" value="1"/>
</dbReference>
<dbReference type="Gene3D" id="1.10.10.41">
    <property type="entry name" value="Yeast DNA topoisomerase - domain 1"/>
    <property type="match status" value="1"/>
</dbReference>
<dbReference type="InterPro" id="IPR011010">
    <property type="entry name" value="DNA_brk_join_enz"/>
</dbReference>
<dbReference type="InterPro" id="IPR013034">
    <property type="entry name" value="DNA_topo_DNA_db_N_dom1"/>
</dbReference>
<dbReference type="InterPro" id="IPR013030">
    <property type="entry name" value="DNA_topo_DNA_db_N_dom2"/>
</dbReference>
<dbReference type="InterPro" id="IPR001631">
    <property type="entry name" value="TopoI"/>
</dbReference>
<dbReference type="InterPro" id="IPR025834">
    <property type="entry name" value="TopoI_C_dom"/>
</dbReference>
<dbReference type="InterPro" id="IPR014711">
    <property type="entry name" value="TopoI_cat_a-hlx-sub_euk"/>
</dbReference>
<dbReference type="InterPro" id="IPR014727">
    <property type="entry name" value="TopoI_cat_a/b-sub_euk"/>
</dbReference>
<dbReference type="InterPro" id="IPR013500">
    <property type="entry name" value="TopoI_cat_euk"/>
</dbReference>
<dbReference type="InterPro" id="IPR008336">
    <property type="entry name" value="TopoI_DNA-bd_euk"/>
</dbReference>
<dbReference type="InterPro" id="IPR036202">
    <property type="entry name" value="TopoI_DNA-bd_euk_N_sf"/>
</dbReference>
<dbReference type="InterPro" id="IPR013499">
    <property type="entry name" value="TopoI_euk"/>
</dbReference>
<dbReference type="InterPro" id="IPR018521">
    <property type="entry name" value="TopoIB_AS"/>
</dbReference>
<dbReference type="InterPro" id="IPR048045">
    <property type="entry name" value="Topoisomer_I_DNA-bd"/>
</dbReference>
<dbReference type="InterPro" id="IPR051062">
    <property type="entry name" value="Topoisomerase_IB"/>
</dbReference>
<dbReference type="PANTHER" id="PTHR10290:SF5">
    <property type="entry name" value="DNA TOPOISOMERASE 1"/>
    <property type="match status" value="1"/>
</dbReference>
<dbReference type="PANTHER" id="PTHR10290">
    <property type="entry name" value="DNA TOPOISOMERASE I"/>
    <property type="match status" value="1"/>
</dbReference>
<dbReference type="Pfam" id="PF14370">
    <property type="entry name" value="Topo_C_assoc"/>
    <property type="match status" value="1"/>
</dbReference>
<dbReference type="Pfam" id="PF01028">
    <property type="entry name" value="Topoisom_I"/>
    <property type="match status" value="1"/>
</dbReference>
<dbReference type="Pfam" id="PF02919">
    <property type="entry name" value="Topoisom_I_N"/>
    <property type="match status" value="1"/>
</dbReference>
<dbReference type="PRINTS" id="PR00416">
    <property type="entry name" value="EUTPISMRASEI"/>
</dbReference>
<dbReference type="SMART" id="SM00435">
    <property type="entry name" value="TOPEUc"/>
    <property type="match status" value="1"/>
</dbReference>
<dbReference type="SUPFAM" id="SSF56349">
    <property type="entry name" value="DNA breaking-rejoining enzymes"/>
    <property type="match status" value="1"/>
</dbReference>
<dbReference type="SUPFAM" id="SSF46596">
    <property type="entry name" value="Eukaryotic DNA topoisomerase I, dispensable insert domain"/>
    <property type="match status" value="1"/>
</dbReference>
<dbReference type="SUPFAM" id="SSF56741">
    <property type="entry name" value="Eukaryotic DNA topoisomerase I, N-terminal DNA-binding fragment"/>
    <property type="match status" value="1"/>
</dbReference>
<dbReference type="PROSITE" id="PS00176">
    <property type="entry name" value="TOPO_IB_1"/>
    <property type="match status" value="1"/>
</dbReference>
<dbReference type="PROSITE" id="PS52038">
    <property type="entry name" value="TOPO_IB_2"/>
    <property type="match status" value="1"/>
</dbReference>
<proteinExistence type="evidence at protein level"/>
<gene>
    <name type="primary">Top1</name>
</gene>
<reference key="1">
    <citation type="submission" date="1999-04" db="EMBL/GenBank/DDBJ databases">
        <title>Sequencing of rat topoisomerase I between sensitive and camptothecin-resistant C6 glioblastoma cell lines.</title>
        <authorList>
            <person name="Pourquier P."/>
            <person name="Gioffre C."/>
            <person name="Ueng L.-M."/>
            <person name="Robert J."/>
            <person name="Pommier Y."/>
        </authorList>
    </citation>
    <scope>NUCLEOTIDE SEQUENCE [MRNA]</scope>
    <source>
        <tissue>Glioblastoma</tissue>
    </source>
</reference>
<reference key="2">
    <citation type="journal article" date="2012" name="Nat. Commun.">
        <title>Quantitative maps of protein phosphorylation sites across 14 different rat organs and tissues.</title>
        <authorList>
            <person name="Lundby A."/>
            <person name="Secher A."/>
            <person name="Lage K."/>
            <person name="Nordsborg N.B."/>
            <person name="Dmytriyev A."/>
            <person name="Lundby C."/>
            <person name="Olsen J.V."/>
        </authorList>
    </citation>
    <scope>PHOSPHORYLATION [LARGE SCALE ANALYSIS] AT SER-10 AND SER-114</scope>
    <scope>IDENTIFICATION BY MASS SPECTROMETRY [LARGE SCALE ANALYSIS]</scope>
</reference>
<comment type="function">
    <text evidence="2">Releases the supercoiling and torsional tension of DNA introduced during the DNA replication and transcription by transiently cleaving and rejoining one strand of the DNA duplex. Introduces a single-strand break via transesterification at a target site in duplex DNA. The scissile phosphodiester is attacked by the catalytic tyrosine of the enzyme, resulting in the formation of a DNA-(3'-phosphotyrosyl)-enzyme intermediate and the expulsion of a 5'-OH DNA strand. The free DNA strand then rotates around the intact phosphodiester bond on the opposing strand, thus removing DNA supercoils. Finally, in the religation step, the DNA 5'-OH attacks the covalent intermediate to expel the active-site tyrosine and restore the DNA phosphodiester backbone. Regulates the alternative splicing of tissue factor (F3) pre-mRNA in endothelial cells. Involved in the circadian transcription of the core circadian clock component BMAL1 by altering the chromatin structure around the ROR response elements (ROREs) on the BMAL1 promoter.</text>
</comment>
<comment type="catalytic activity">
    <reaction evidence="5">
        <text>ATP-independent breakage of single-stranded DNA, followed by passage and rejoining.</text>
        <dbReference type="EC" id="5.6.2.1"/>
    </reaction>
</comment>
<comment type="subunit">
    <text evidence="2">Monomer. Interacts with ERCC6. Interacts with TPRN; TPRN interacts with a number of DNA damage response proteins, is recruited to sites of DNA damage and may play a role in DNA damage repair.</text>
</comment>
<comment type="subcellular location">
    <subcellularLocation>
        <location evidence="2">Nucleus</location>
        <location evidence="2">Nucleolus</location>
    </subcellularLocation>
    <subcellularLocation>
        <location evidence="2">Nucleus</location>
        <location evidence="2">Nucleoplasm</location>
    </subcellularLocation>
    <text evidence="2">Diffuse nuclear localization with some enrichment in nucleoli. On CPT treatment, cleared from nucleoli into nucleoplasm. Sumoylated forms found in both nucleoplasm and nucleoli.</text>
</comment>
<comment type="PTM">
    <text evidence="2">Sumoylated. Lys-119 is the main site of sumoylation. Sumoylation plays a role in partitioning TOP1 between nucleoli and nucleoplasm. Levels are dramatically increased on camptothecin (CPT) treatment.</text>
</comment>
<comment type="PTM">
    <text evidence="2">Phosphorylation at Ser-508 by CK2 increases binding to supercoiled DNA and sensitivity to camptothecin.</text>
</comment>
<comment type="miscellaneous">
    <text>Eukaryotic topoisomerase I and II can relax both negative and positive supercoils, whereas prokaryotic enzymes relax only negative supercoils.</text>
</comment>
<comment type="similarity">
    <text evidence="7">Belongs to the type IB topoisomerase family.</text>
</comment>
<name>TOP1_RAT</name>
<feature type="initiator methionine" description="Removed" evidence="2">
    <location>
        <position position="1"/>
    </location>
</feature>
<feature type="chain" id="PRO_0000145203" description="DNA topoisomerase 1">
    <location>
        <begin position="2"/>
        <end position="767"/>
    </location>
</feature>
<feature type="domain" description="Topo IB-type catalytic" evidence="4">
    <location>
        <begin position="434"/>
        <end position="767"/>
    </location>
</feature>
<feature type="region of interest" description="Disordered" evidence="6">
    <location>
        <begin position="1"/>
        <end position="200"/>
    </location>
</feature>
<feature type="region of interest" description="Interaction with DNA" evidence="1">
    <location>
        <begin position="427"/>
        <end position="428"/>
    </location>
</feature>
<feature type="region of interest" description="Interaction with DNA" evidence="1">
    <location>
        <begin position="490"/>
        <end position="495"/>
    </location>
</feature>
<feature type="region of interest" description="Interaction with DNA" evidence="1">
    <location>
        <begin position="587"/>
        <end position="589"/>
    </location>
</feature>
<feature type="compositionally biased region" description="Basic and acidic residues" evidence="6">
    <location>
        <begin position="1"/>
        <end position="23"/>
    </location>
</feature>
<feature type="compositionally biased region" description="Basic residues" evidence="6">
    <location>
        <begin position="24"/>
        <end position="39"/>
    </location>
</feature>
<feature type="compositionally biased region" description="Basic and acidic residues" evidence="6">
    <location>
        <begin position="40"/>
        <end position="110"/>
    </location>
</feature>
<feature type="compositionally biased region" description="Basic and acidic residues" evidence="6">
    <location>
        <begin position="131"/>
        <end position="168"/>
    </location>
</feature>
<feature type="compositionally biased region" description="Basic and acidic residues" evidence="6">
    <location>
        <begin position="181"/>
        <end position="200"/>
    </location>
</feature>
<feature type="active site" description="O-(3'-phospho-DNA)-tyrosine intermediate" evidence="4 5">
    <location>
        <position position="725"/>
    </location>
</feature>
<feature type="site" description="Interaction with DNA" evidence="1">
    <location>
        <position position="318"/>
    </location>
</feature>
<feature type="site" description="Interaction with DNA" evidence="1">
    <location>
        <position position="366"/>
    </location>
</feature>
<feature type="site" description="Interaction with DNA" evidence="1">
    <location>
        <position position="414"/>
    </location>
</feature>
<feature type="site" description="Interaction with DNA" evidence="1">
    <location>
        <position position="445"/>
    </location>
</feature>
<feature type="site" description="Interaction with DNA" evidence="1">
    <location>
        <position position="503"/>
    </location>
</feature>
<feature type="site" description="Interaction with DNA" evidence="1">
    <location>
        <position position="534"/>
    </location>
</feature>
<feature type="site" description="Interaction with DNA" evidence="1">
    <location>
        <position position="576"/>
    </location>
</feature>
<feature type="site" description="Interaction with DNA" evidence="1">
    <location>
        <position position="634"/>
    </location>
</feature>
<feature type="site" description="Interaction with DNA" evidence="1">
    <location>
        <position position="652"/>
    </location>
</feature>
<feature type="modified residue" description="N-acetylserine" evidence="2">
    <location>
        <position position="2"/>
    </location>
</feature>
<feature type="modified residue" description="Phosphoserine" evidence="2">
    <location>
        <position position="2"/>
    </location>
</feature>
<feature type="modified residue" description="Phosphoserine" evidence="8">
    <location>
        <position position="10"/>
    </location>
</feature>
<feature type="modified residue" description="Phosphoserine" evidence="2">
    <location>
        <position position="59"/>
    </location>
</feature>
<feature type="modified residue" description="Phosphoserine" evidence="8">
    <location>
        <position position="114"/>
    </location>
</feature>
<feature type="modified residue" description="N6-acetyllysine; alternate" evidence="3">
    <location>
        <position position="174"/>
    </location>
</feature>
<feature type="modified residue" description="N6-acetyllysine" evidence="2">
    <location>
        <position position="282"/>
    </location>
</feature>
<feature type="modified residue" description="Phosphoserine; by CK2" evidence="2">
    <location>
        <position position="508"/>
    </location>
</feature>
<feature type="cross-link" description="Glycyl lysine isopeptide (Lys-Gly) (interchain with G-Cter in SUMO2)" evidence="2">
    <location>
        <position position="103"/>
    </location>
</feature>
<feature type="cross-link" description="Glycyl lysine isopeptide (Lys-Gly) (interchain with G-Cter in SUMO); alternate" evidence="7">
    <location>
        <position position="105"/>
    </location>
</feature>
<feature type="cross-link" description="Glycyl lysine isopeptide (Lys-Gly) (interchain with G-Cter in SUMO2); alternate" evidence="2">
    <location>
        <position position="105"/>
    </location>
</feature>
<feature type="cross-link" description="Glycyl lysine isopeptide (Lys-Gly) (interchain with G-Cter in SUMO); alternate" evidence="1">
    <location>
        <position position="119"/>
    </location>
</feature>
<feature type="cross-link" description="Glycyl lysine isopeptide (Lys-Gly) (interchain with G-Cter in SUMO1); alternate" evidence="2">
    <location>
        <position position="119"/>
    </location>
</feature>
<feature type="cross-link" description="Glycyl lysine isopeptide (Lys-Gly) (interchain with G-Cter in SUMO2); alternate" evidence="2">
    <location>
        <position position="119"/>
    </location>
</feature>
<feature type="cross-link" description="Glycyl lysine isopeptide (Lys-Gly) (interchain with G-Cter in SUMO2)" evidence="2">
    <location>
        <position position="136"/>
    </location>
</feature>
<feature type="cross-link" description="Glycyl lysine isopeptide (Lys-Gly) (interchain with G-Cter in SUMO2)" evidence="2">
    <location>
        <position position="150"/>
    </location>
</feature>
<feature type="cross-link" description="Glycyl lysine isopeptide (Lys-Gly) (interchain with G-Cter in SUMO); alternate" evidence="7">
    <location>
        <position position="155"/>
    </location>
</feature>
<feature type="cross-link" description="Glycyl lysine isopeptide (Lys-Gly) (interchain with G-Cter in SUMO2); alternate" evidence="2">
    <location>
        <position position="155"/>
    </location>
</feature>
<feature type="cross-link" description="Glycyl lysine isopeptide (Lys-Gly) (interchain with G-Cter in SUMO2)" evidence="2">
    <location>
        <position position="160"/>
    </location>
</feature>
<feature type="cross-link" description="Glycyl lysine isopeptide (Lys-Gly) (interchain with G-Cter in SUMO2)" evidence="2">
    <location>
        <position position="166"/>
    </location>
</feature>
<feature type="cross-link" description="Glycyl lysine isopeptide (Lys-Gly) (interchain with G-Cter in SUMO2); alternate" evidence="2">
    <location>
        <position position="174"/>
    </location>
</feature>
<feature type="cross-link" description="Glycyl lysine isopeptide (Lys-Gly) (interchain with G-Cter in SUMO2)" evidence="2">
    <location>
        <position position="206"/>
    </location>
</feature>
<feature type="cross-link" description="Glycyl lysine isopeptide (Lys-Gly) (interchain with G-Cter in SUMO2)" evidence="2">
    <location>
        <position position="338"/>
    </location>
</feature>
<feature type="cross-link" description="Glycyl lysine isopeptide (Lys-Gly) (interchain with G-Cter in SUMO2)" evidence="2">
    <location>
        <position position="551"/>
    </location>
</feature>
<feature type="cross-link" description="Glycyl lysine isopeptide (Lys-Gly) (interchain with G-Cter in SUMO2)" evidence="2">
    <location>
        <position position="644"/>
    </location>
</feature>
<feature type="cross-link" description="Glycyl lysine isopeptide (Lys-Gly) (interchain with G-Cter in SUMO2)" evidence="2">
    <location>
        <position position="702"/>
    </location>
</feature>
<feature type="cross-link" description="Glycyl lysine isopeptide (Lys-Gly) (interchain with G-Cter in SUMO2)" evidence="2">
    <location>
        <position position="714"/>
    </location>
</feature>
<sequence>MSGDHLHNDSQIEADFRLNDSHKHKDKHKDREHRHKEHKKDKDKDREKSKHSNSEHKDSEKKHKEKEKTKHKDGSSDKHKDKHKDRDKEKRKEEKIRAAGDAKIKKEKENGFSSPPRIKDEPEDDGYFAPPKEDIKPLKRPRDEDDADYKPKKIKTEDIKKEKKRKLEEEEDGKLKKPKNKDKDKKVAEPDNKKKKAKKEEEQKWKWWEEERYPEGIKWKFLEHKGPVFAPPYEPLPEGVKFYYDGKVMKLSPKAEEVATFFAKMLDHEYTTKEIFRKNFFKDWRKEMTNDEKNTITNLSKCDFTQMSQYFKAQSEARKQMSKEEKLKIKEENEKLLKEYGFCVMDNHRERIANFKIEPPGLFRGRGNHPKMGMLKRRIMPEDIIINCSKDAKVPSPPPGHKWKEVRHDNKVTWLVSWTENIQGSIKYIMLNPSSRIKGEKDWQKYETARRLKKCVDKIRNQYREDWKSKEMKVRQRAVALYFIDKLALRAGNEKEEGETADTVGCCSLRVEHINLHPELDGQEYVVEFDFPGKDSIRYYNKVPVEKRVFKNLQLFMENKQPEDDLFDRLNTGILNKHLQDLMEGLTAKVFRTYNASITLQQQLKELTAPDENVPAKILSYNRANRAVAILCNHQRAPPKTFEKSMMNLQSKIDAKKDQLADARKDLKSAKADAKVMKDAKTKKVVESKKKAVQRLEEQLMKLEVQATDREENKQIALGTSKLNYLDPRITVAWCKKWGVPIEKIYNKTQREKFAWAIDMTDEDYEF</sequence>
<protein>
    <recommendedName>
        <fullName>DNA topoisomerase 1</fullName>
        <ecNumber evidence="5">5.6.2.1</ecNumber>
    </recommendedName>
    <alternativeName>
        <fullName>DNA topoisomerase I</fullName>
    </alternativeName>
</protein>
<accession>Q9WUL0</accession>
<evidence type="ECO:0000250" key="1"/>
<evidence type="ECO:0000250" key="2">
    <source>
        <dbReference type="UniProtKB" id="P11387"/>
    </source>
</evidence>
<evidence type="ECO:0000250" key="3">
    <source>
        <dbReference type="UniProtKB" id="Q04750"/>
    </source>
</evidence>
<evidence type="ECO:0000255" key="4">
    <source>
        <dbReference type="PROSITE-ProRule" id="PRU01382"/>
    </source>
</evidence>
<evidence type="ECO:0000255" key="5">
    <source>
        <dbReference type="PROSITE-ProRule" id="PRU10130"/>
    </source>
</evidence>
<evidence type="ECO:0000256" key="6">
    <source>
        <dbReference type="SAM" id="MobiDB-lite"/>
    </source>
</evidence>
<evidence type="ECO:0000305" key="7"/>
<evidence type="ECO:0007744" key="8">
    <source>
    </source>
</evidence>